<accession>Q6MD65</accession>
<comment type="function">
    <text evidence="1">One of several proteins that assist in the late maturation steps of the functional core of the 30S ribosomal subunit. Associates with free 30S ribosomal subunits (but not with 30S subunits that are part of 70S ribosomes or polysomes). Required for efficient processing of 16S rRNA. May interact with the 5'-terminal helix region of 16S rRNA.</text>
</comment>
<comment type="subunit">
    <text evidence="1">Monomer. Binds 30S ribosomal subunits, but not 50S ribosomal subunits or 70S ribosomes.</text>
</comment>
<comment type="subcellular location">
    <subcellularLocation>
        <location evidence="1">Cytoplasm</location>
    </subcellularLocation>
</comment>
<comment type="similarity">
    <text evidence="1">Belongs to the RbfA family.</text>
</comment>
<proteinExistence type="inferred from homology"/>
<reference key="1">
    <citation type="journal article" date="2004" name="Science">
        <title>Illuminating the evolutionary history of chlamydiae.</title>
        <authorList>
            <person name="Horn M."/>
            <person name="Collingro A."/>
            <person name="Schmitz-Esser S."/>
            <person name="Beier C.L."/>
            <person name="Purkhold U."/>
            <person name="Fartmann B."/>
            <person name="Brandt P."/>
            <person name="Nyakatura G.J."/>
            <person name="Droege M."/>
            <person name="Frishman D."/>
            <person name="Rattei T."/>
            <person name="Mewes H.-W."/>
            <person name="Wagner M."/>
        </authorList>
    </citation>
    <scope>NUCLEOTIDE SEQUENCE [LARGE SCALE GENOMIC DNA]</scope>
    <source>
        <strain>UWE25</strain>
    </source>
</reference>
<sequence>MAIQRTDRLNSLLKEVISEVIRRDVRNPYVTELVTVTRVQISRDLRYAKVFISIIGSEQAKVETIEALNSAAGFIAVNASQKVVMRYFPELNFKLDDSVDKHMRIEELLGKITKERESRQGDNSDQLEQEP</sequence>
<keyword id="KW-0963">Cytoplasm</keyword>
<keyword id="KW-1185">Reference proteome</keyword>
<keyword id="KW-0690">Ribosome biogenesis</keyword>
<dbReference type="EMBL" id="BX908798">
    <property type="protein sequence ID" value="CAF23484.1"/>
    <property type="molecule type" value="Genomic_DNA"/>
</dbReference>
<dbReference type="RefSeq" id="WP_011175310.1">
    <property type="nucleotide sequence ID" value="NC_005861.2"/>
</dbReference>
<dbReference type="SMR" id="Q6MD65"/>
<dbReference type="STRING" id="264201.pc0760"/>
<dbReference type="KEGG" id="pcu:PC_RS03650"/>
<dbReference type="eggNOG" id="COG0858">
    <property type="taxonomic scope" value="Bacteria"/>
</dbReference>
<dbReference type="HOGENOM" id="CLU_089475_6_3_0"/>
<dbReference type="OrthoDB" id="21494at2"/>
<dbReference type="Proteomes" id="UP000000529">
    <property type="component" value="Chromosome"/>
</dbReference>
<dbReference type="GO" id="GO:0005829">
    <property type="term" value="C:cytosol"/>
    <property type="evidence" value="ECO:0007669"/>
    <property type="project" value="TreeGrafter"/>
</dbReference>
<dbReference type="GO" id="GO:0043024">
    <property type="term" value="F:ribosomal small subunit binding"/>
    <property type="evidence" value="ECO:0007669"/>
    <property type="project" value="TreeGrafter"/>
</dbReference>
<dbReference type="GO" id="GO:0030490">
    <property type="term" value="P:maturation of SSU-rRNA"/>
    <property type="evidence" value="ECO:0007669"/>
    <property type="project" value="UniProtKB-UniRule"/>
</dbReference>
<dbReference type="Gene3D" id="3.30.300.20">
    <property type="match status" value="1"/>
</dbReference>
<dbReference type="HAMAP" id="MF_00003">
    <property type="entry name" value="RbfA"/>
    <property type="match status" value="1"/>
</dbReference>
<dbReference type="InterPro" id="IPR015946">
    <property type="entry name" value="KH_dom-like_a/b"/>
</dbReference>
<dbReference type="InterPro" id="IPR000238">
    <property type="entry name" value="RbfA"/>
</dbReference>
<dbReference type="InterPro" id="IPR023799">
    <property type="entry name" value="RbfA_dom_sf"/>
</dbReference>
<dbReference type="InterPro" id="IPR020053">
    <property type="entry name" value="Ribosome-bd_factorA_CS"/>
</dbReference>
<dbReference type="NCBIfam" id="TIGR00082">
    <property type="entry name" value="rbfA"/>
    <property type="match status" value="1"/>
</dbReference>
<dbReference type="PANTHER" id="PTHR33515">
    <property type="entry name" value="RIBOSOME-BINDING FACTOR A, CHLOROPLASTIC-RELATED"/>
    <property type="match status" value="1"/>
</dbReference>
<dbReference type="PANTHER" id="PTHR33515:SF1">
    <property type="entry name" value="RIBOSOME-BINDING FACTOR A, CHLOROPLASTIC-RELATED"/>
    <property type="match status" value="1"/>
</dbReference>
<dbReference type="Pfam" id="PF02033">
    <property type="entry name" value="RBFA"/>
    <property type="match status" value="1"/>
</dbReference>
<dbReference type="SUPFAM" id="SSF89919">
    <property type="entry name" value="Ribosome-binding factor A, RbfA"/>
    <property type="match status" value="1"/>
</dbReference>
<dbReference type="PROSITE" id="PS01319">
    <property type="entry name" value="RBFA"/>
    <property type="match status" value="1"/>
</dbReference>
<protein>
    <recommendedName>
        <fullName evidence="1">Ribosome-binding factor A</fullName>
    </recommendedName>
</protein>
<feature type="chain" id="PRO_0000102706" description="Ribosome-binding factor A">
    <location>
        <begin position="1"/>
        <end position="131"/>
    </location>
</feature>
<name>RBFA_PARUW</name>
<evidence type="ECO:0000255" key="1">
    <source>
        <dbReference type="HAMAP-Rule" id="MF_00003"/>
    </source>
</evidence>
<gene>
    <name evidence="1" type="primary">rbfA</name>
    <name type="ordered locus">pc0760</name>
</gene>
<organism>
    <name type="scientific">Protochlamydia amoebophila (strain UWE25)</name>
    <dbReference type="NCBI Taxonomy" id="264201"/>
    <lineage>
        <taxon>Bacteria</taxon>
        <taxon>Pseudomonadati</taxon>
        <taxon>Chlamydiota</taxon>
        <taxon>Chlamydiia</taxon>
        <taxon>Parachlamydiales</taxon>
        <taxon>Parachlamydiaceae</taxon>
        <taxon>Candidatus Protochlamydia</taxon>
    </lineage>
</organism>